<gene>
    <name evidence="1" type="primary">moaC</name>
    <name type="ordered locus">Spro_1322</name>
</gene>
<proteinExistence type="inferred from homology"/>
<accession>A8GBD6</accession>
<reference key="1">
    <citation type="submission" date="2007-09" db="EMBL/GenBank/DDBJ databases">
        <title>Complete sequence of chromosome of Serratia proteamaculans 568.</title>
        <authorList>
            <consortium name="US DOE Joint Genome Institute"/>
            <person name="Copeland A."/>
            <person name="Lucas S."/>
            <person name="Lapidus A."/>
            <person name="Barry K."/>
            <person name="Glavina del Rio T."/>
            <person name="Dalin E."/>
            <person name="Tice H."/>
            <person name="Pitluck S."/>
            <person name="Chain P."/>
            <person name="Malfatti S."/>
            <person name="Shin M."/>
            <person name="Vergez L."/>
            <person name="Schmutz J."/>
            <person name="Larimer F."/>
            <person name="Land M."/>
            <person name="Hauser L."/>
            <person name="Kyrpides N."/>
            <person name="Kim E."/>
            <person name="Taghavi S."/>
            <person name="Newman L."/>
            <person name="Vangronsveld J."/>
            <person name="van der Lelie D."/>
            <person name="Richardson P."/>
        </authorList>
    </citation>
    <scope>NUCLEOTIDE SEQUENCE [LARGE SCALE GENOMIC DNA]</scope>
    <source>
        <strain>568</strain>
    </source>
</reference>
<sequence>MTQLTHINAAGEAHMVDVSAKAETVREARAEAFVEMLPTTLAMIIEGSHHKGDVFATARIAGIQAAKRTWELIPLCHPLMLSKVEVQLEAQPEHSRVRIETCCRLTGKTGVEMEALTAASVAALTIYDMCKAVQKDMVIGPVRLLAKSGGKSGDFKVEL</sequence>
<organism>
    <name type="scientific">Serratia proteamaculans (strain 568)</name>
    <dbReference type="NCBI Taxonomy" id="399741"/>
    <lineage>
        <taxon>Bacteria</taxon>
        <taxon>Pseudomonadati</taxon>
        <taxon>Pseudomonadota</taxon>
        <taxon>Gammaproteobacteria</taxon>
        <taxon>Enterobacterales</taxon>
        <taxon>Yersiniaceae</taxon>
        <taxon>Serratia</taxon>
    </lineage>
</organism>
<comment type="function">
    <text evidence="1">Catalyzes the conversion of (8S)-3',8-cyclo-7,8-dihydroguanosine 5'-triphosphate to cyclic pyranopterin monophosphate (cPMP).</text>
</comment>
<comment type="catalytic activity">
    <reaction evidence="1">
        <text>(8S)-3',8-cyclo-7,8-dihydroguanosine 5'-triphosphate = cyclic pyranopterin phosphate + diphosphate</text>
        <dbReference type="Rhea" id="RHEA:49580"/>
        <dbReference type="ChEBI" id="CHEBI:33019"/>
        <dbReference type="ChEBI" id="CHEBI:59648"/>
        <dbReference type="ChEBI" id="CHEBI:131766"/>
        <dbReference type="EC" id="4.6.1.17"/>
    </reaction>
</comment>
<comment type="pathway">
    <text evidence="1">Cofactor biosynthesis; molybdopterin biosynthesis.</text>
</comment>
<comment type="subunit">
    <text evidence="1">Homohexamer; trimer of dimers.</text>
</comment>
<comment type="similarity">
    <text evidence="1">Belongs to the MoaC family.</text>
</comment>
<dbReference type="EC" id="4.6.1.17" evidence="1"/>
<dbReference type="EMBL" id="CP000826">
    <property type="protein sequence ID" value="ABV40426.1"/>
    <property type="molecule type" value="Genomic_DNA"/>
</dbReference>
<dbReference type="SMR" id="A8GBD6"/>
<dbReference type="STRING" id="399741.Spro_1322"/>
<dbReference type="KEGG" id="spe:Spro_1322"/>
<dbReference type="eggNOG" id="COG0315">
    <property type="taxonomic scope" value="Bacteria"/>
</dbReference>
<dbReference type="HOGENOM" id="CLU_074693_1_1_6"/>
<dbReference type="OrthoDB" id="9794429at2"/>
<dbReference type="UniPathway" id="UPA00344"/>
<dbReference type="GO" id="GO:0061799">
    <property type="term" value="F:cyclic pyranopterin monophosphate synthase activity"/>
    <property type="evidence" value="ECO:0007669"/>
    <property type="project" value="UniProtKB-UniRule"/>
</dbReference>
<dbReference type="GO" id="GO:0006777">
    <property type="term" value="P:Mo-molybdopterin cofactor biosynthetic process"/>
    <property type="evidence" value="ECO:0007669"/>
    <property type="project" value="UniProtKB-UniRule"/>
</dbReference>
<dbReference type="CDD" id="cd01420">
    <property type="entry name" value="MoaC_PE"/>
    <property type="match status" value="1"/>
</dbReference>
<dbReference type="FunFam" id="3.30.70.640:FF:000001">
    <property type="entry name" value="Cyclic pyranopterin monophosphate synthase"/>
    <property type="match status" value="1"/>
</dbReference>
<dbReference type="Gene3D" id="3.30.70.640">
    <property type="entry name" value="Molybdopterin cofactor biosynthesis C (MoaC) domain"/>
    <property type="match status" value="1"/>
</dbReference>
<dbReference type="HAMAP" id="MF_01224_B">
    <property type="entry name" value="MoaC_B"/>
    <property type="match status" value="1"/>
</dbReference>
<dbReference type="InterPro" id="IPR023045">
    <property type="entry name" value="MoaC"/>
</dbReference>
<dbReference type="InterPro" id="IPR047594">
    <property type="entry name" value="MoaC_bact/euk"/>
</dbReference>
<dbReference type="InterPro" id="IPR036522">
    <property type="entry name" value="MoaC_sf"/>
</dbReference>
<dbReference type="InterPro" id="IPR050105">
    <property type="entry name" value="MoCo_biosynth_MoaA/MoaC"/>
</dbReference>
<dbReference type="InterPro" id="IPR002820">
    <property type="entry name" value="Mopterin_CF_biosynth-C_dom"/>
</dbReference>
<dbReference type="NCBIfam" id="TIGR00581">
    <property type="entry name" value="moaC"/>
    <property type="match status" value="1"/>
</dbReference>
<dbReference type="NCBIfam" id="NF006870">
    <property type="entry name" value="PRK09364.1"/>
    <property type="match status" value="1"/>
</dbReference>
<dbReference type="PANTHER" id="PTHR22960">
    <property type="entry name" value="MOLYBDOPTERIN COFACTOR SYNTHESIS PROTEIN A"/>
    <property type="match status" value="1"/>
</dbReference>
<dbReference type="Pfam" id="PF01967">
    <property type="entry name" value="MoaC"/>
    <property type="match status" value="1"/>
</dbReference>
<dbReference type="SUPFAM" id="SSF55040">
    <property type="entry name" value="Molybdenum cofactor biosynthesis protein C, MoaC"/>
    <property type="match status" value="1"/>
</dbReference>
<name>MOAC_SERP5</name>
<feature type="chain" id="PRO_1000066803" description="Cyclic pyranopterin monophosphate synthase">
    <location>
        <begin position="1"/>
        <end position="159"/>
    </location>
</feature>
<feature type="active site" evidence="1">
    <location>
        <position position="128"/>
    </location>
</feature>
<feature type="binding site" evidence="1">
    <location>
        <begin position="75"/>
        <end position="77"/>
    </location>
    <ligand>
        <name>substrate</name>
    </ligand>
</feature>
<feature type="binding site" evidence="1">
    <location>
        <begin position="113"/>
        <end position="114"/>
    </location>
    <ligand>
        <name>substrate</name>
    </ligand>
</feature>
<evidence type="ECO:0000255" key="1">
    <source>
        <dbReference type="HAMAP-Rule" id="MF_01224"/>
    </source>
</evidence>
<keyword id="KW-0456">Lyase</keyword>
<keyword id="KW-0501">Molybdenum cofactor biosynthesis</keyword>
<protein>
    <recommendedName>
        <fullName evidence="1">Cyclic pyranopterin monophosphate synthase</fullName>
        <ecNumber evidence="1">4.6.1.17</ecNumber>
    </recommendedName>
    <alternativeName>
        <fullName evidence="1">Molybdenum cofactor biosynthesis protein C</fullName>
    </alternativeName>
</protein>